<gene>
    <name evidence="2" type="primary">ddl</name>
    <name type="ordered locus">Mjls_1909</name>
</gene>
<sequence>MIARNQRTRVAVVYGGRSSEHAISCVSAGSILRNLDPERFDVVAVGITPDGSWVLTDGRPETLAITDGRLPEVSAESGTALALPADPGRRGELVSLSPAPAGEVLAAVDVVFPVLHGPYGEDGTIQGLLELAGVPYVGAGVLASAAGMDKEFTKKLLVAEGLPVGDHVVLRPGRANVTLDERERLGLPVFVKPARGGSSIGVSRVSDWAELPAAIEAARRHDPKVIVEAGIAGRELECGVLEYPDGRVDASTIGEIRVAGVRGREDGFYDFATKYLDDGAELDVPAKVEDDVADEIRRLAIRAFRAIDCQGLARVDFFLTDDGPVVNEINTMPGFTTISMYPRMWAASGVDYPTLLAAMVDTAVARGTGLR</sequence>
<feature type="chain" id="PRO_1000057325" description="D-alanine--D-alanine ligase">
    <location>
        <begin position="1"/>
        <end position="371"/>
    </location>
</feature>
<feature type="domain" description="ATP-grasp" evidence="2">
    <location>
        <begin position="154"/>
        <end position="361"/>
    </location>
</feature>
<feature type="binding site" evidence="2">
    <location>
        <begin position="182"/>
        <end position="237"/>
    </location>
    <ligand>
        <name>ATP</name>
        <dbReference type="ChEBI" id="CHEBI:30616"/>
    </ligand>
</feature>
<feature type="binding site" evidence="2">
    <location>
        <position position="316"/>
    </location>
    <ligand>
        <name>Mg(2+)</name>
        <dbReference type="ChEBI" id="CHEBI:18420"/>
        <label>1</label>
    </ligand>
</feature>
<feature type="binding site" evidence="2">
    <location>
        <position position="328"/>
    </location>
    <ligand>
        <name>Mg(2+)</name>
        <dbReference type="ChEBI" id="CHEBI:18420"/>
        <label>1</label>
    </ligand>
</feature>
<feature type="binding site" evidence="2">
    <location>
        <position position="328"/>
    </location>
    <ligand>
        <name>Mg(2+)</name>
        <dbReference type="ChEBI" id="CHEBI:18420"/>
        <label>2</label>
    </ligand>
</feature>
<feature type="binding site" evidence="2">
    <location>
        <position position="330"/>
    </location>
    <ligand>
        <name>Mg(2+)</name>
        <dbReference type="ChEBI" id="CHEBI:18420"/>
        <label>2</label>
    </ligand>
</feature>
<protein>
    <recommendedName>
        <fullName evidence="2">D-alanine--D-alanine ligase</fullName>
        <ecNumber evidence="2">6.3.2.4</ecNumber>
    </recommendedName>
    <alternativeName>
        <fullName evidence="2">D-Ala-D-Ala ligase</fullName>
    </alternativeName>
    <alternativeName>
        <fullName evidence="2">D-alanylalanine synthetase</fullName>
    </alternativeName>
</protein>
<comment type="function">
    <text evidence="2">Cell wall formation.</text>
</comment>
<comment type="catalytic activity">
    <reaction evidence="2">
        <text>2 D-alanine + ATP = D-alanyl-D-alanine + ADP + phosphate + H(+)</text>
        <dbReference type="Rhea" id="RHEA:11224"/>
        <dbReference type="ChEBI" id="CHEBI:15378"/>
        <dbReference type="ChEBI" id="CHEBI:30616"/>
        <dbReference type="ChEBI" id="CHEBI:43474"/>
        <dbReference type="ChEBI" id="CHEBI:57416"/>
        <dbReference type="ChEBI" id="CHEBI:57822"/>
        <dbReference type="ChEBI" id="CHEBI:456216"/>
        <dbReference type="EC" id="6.3.2.4"/>
    </reaction>
</comment>
<comment type="cofactor">
    <cofactor evidence="1">
        <name>Mg(2+)</name>
        <dbReference type="ChEBI" id="CHEBI:18420"/>
    </cofactor>
    <cofactor evidence="1">
        <name>Mn(2+)</name>
        <dbReference type="ChEBI" id="CHEBI:29035"/>
    </cofactor>
    <text evidence="1">Binds 2 magnesium or manganese ions per subunit.</text>
</comment>
<comment type="pathway">
    <text evidence="2">Cell wall biogenesis; peptidoglycan biosynthesis.</text>
</comment>
<comment type="subcellular location">
    <subcellularLocation>
        <location evidence="2">Cytoplasm</location>
    </subcellularLocation>
</comment>
<comment type="similarity">
    <text evidence="2">Belongs to the D-alanine--D-alanine ligase family.</text>
</comment>
<dbReference type="EC" id="6.3.2.4" evidence="2"/>
<dbReference type="EMBL" id="CP000580">
    <property type="protein sequence ID" value="ABN97697.1"/>
    <property type="molecule type" value="Genomic_DNA"/>
</dbReference>
<dbReference type="SMR" id="A3PXS0"/>
<dbReference type="KEGG" id="mjl:Mjls_1909"/>
<dbReference type="HOGENOM" id="CLU_039268_0_1_11"/>
<dbReference type="BioCyc" id="MSP164757:G1G8C-1928-MONOMER"/>
<dbReference type="UniPathway" id="UPA00219"/>
<dbReference type="GO" id="GO:0005829">
    <property type="term" value="C:cytosol"/>
    <property type="evidence" value="ECO:0007669"/>
    <property type="project" value="TreeGrafter"/>
</dbReference>
<dbReference type="GO" id="GO:0005524">
    <property type="term" value="F:ATP binding"/>
    <property type="evidence" value="ECO:0007669"/>
    <property type="project" value="UniProtKB-KW"/>
</dbReference>
<dbReference type="GO" id="GO:0008716">
    <property type="term" value="F:D-alanine-D-alanine ligase activity"/>
    <property type="evidence" value="ECO:0007669"/>
    <property type="project" value="UniProtKB-UniRule"/>
</dbReference>
<dbReference type="GO" id="GO:0046872">
    <property type="term" value="F:metal ion binding"/>
    <property type="evidence" value="ECO:0007669"/>
    <property type="project" value="UniProtKB-KW"/>
</dbReference>
<dbReference type="GO" id="GO:0071555">
    <property type="term" value="P:cell wall organization"/>
    <property type="evidence" value="ECO:0007669"/>
    <property type="project" value="UniProtKB-KW"/>
</dbReference>
<dbReference type="GO" id="GO:0009252">
    <property type="term" value="P:peptidoglycan biosynthetic process"/>
    <property type="evidence" value="ECO:0007669"/>
    <property type="project" value="UniProtKB-UniRule"/>
</dbReference>
<dbReference type="GO" id="GO:0008360">
    <property type="term" value="P:regulation of cell shape"/>
    <property type="evidence" value="ECO:0007669"/>
    <property type="project" value="UniProtKB-KW"/>
</dbReference>
<dbReference type="FunFam" id="3.30.470.20:FF:000008">
    <property type="entry name" value="D-alanine--D-alanine ligase"/>
    <property type="match status" value="1"/>
</dbReference>
<dbReference type="Gene3D" id="3.40.50.20">
    <property type="match status" value="1"/>
</dbReference>
<dbReference type="Gene3D" id="3.30.1490.20">
    <property type="entry name" value="ATP-grasp fold, A domain"/>
    <property type="match status" value="1"/>
</dbReference>
<dbReference type="Gene3D" id="3.30.470.20">
    <property type="entry name" value="ATP-grasp fold, B domain"/>
    <property type="match status" value="1"/>
</dbReference>
<dbReference type="HAMAP" id="MF_00047">
    <property type="entry name" value="Dala_Dala_lig"/>
    <property type="match status" value="1"/>
</dbReference>
<dbReference type="InterPro" id="IPR011761">
    <property type="entry name" value="ATP-grasp"/>
</dbReference>
<dbReference type="InterPro" id="IPR013815">
    <property type="entry name" value="ATP_grasp_subdomain_1"/>
</dbReference>
<dbReference type="InterPro" id="IPR000291">
    <property type="entry name" value="D-Ala_lig_Van_CS"/>
</dbReference>
<dbReference type="InterPro" id="IPR005905">
    <property type="entry name" value="D_ala_D_ala"/>
</dbReference>
<dbReference type="InterPro" id="IPR011095">
    <property type="entry name" value="Dala_Dala_lig_C"/>
</dbReference>
<dbReference type="InterPro" id="IPR011127">
    <property type="entry name" value="Dala_Dala_lig_N"/>
</dbReference>
<dbReference type="InterPro" id="IPR016185">
    <property type="entry name" value="PreATP-grasp_dom_sf"/>
</dbReference>
<dbReference type="NCBIfam" id="TIGR01205">
    <property type="entry name" value="D_ala_D_alaTIGR"/>
    <property type="match status" value="1"/>
</dbReference>
<dbReference type="NCBIfam" id="NF002378">
    <property type="entry name" value="PRK01372.1"/>
    <property type="match status" value="1"/>
</dbReference>
<dbReference type="NCBIfam" id="NF002528">
    <property type="entry name" value="PRK01966.1-4"/>
    <property type="match status" value="1"/>
</dbReference>
<dbReference type="PANTHER" id="PTHR23132">
    <property type="entry name" value="D-ALANINE--D-ALANINE LIGASE"/>
    <property type="match status" value="1"/>
</dbReference>
<dbReference type="PANTHER" id="PTHR23132:SF25">
    <property type="entry name" value="D-ALANINE--D-ALANINE LIGASE A"/>
    <property type="match status" value="1"/>
</dbReference>
<dbReference type="Pfam" id="PF07478">
    <property type="entry name" value="Dala_Dala_lig_C"/>
    <property type="match status" value="1"/>
</dbReference>
<dbReference type="Pfam" id="PF01820">
    <property type="entry name" value="Dala_Dala_lig_N"/>
    <property type="match status" value="1"/>
</dbReference>
<dbReference type="PIRSF" id="PIRSF039102">
    <property type="entry name" value="Ddl/VanB"/>
    <property type="match status" value="1"/>
</dbReference>
<dbReference type="SUPFAM" id="SSF56059">
    <property type="entry name" value="Glutathione synthetase ATP-binding domain-like"/>
    <property type="match status" value="1"/>
</dbReference>
<dbReference type="SUPFAM" id="SSF52440">
    <property type="entry name" value="PreATP-grasp domain"/>
    <property type="match status" value="1"/>
</dbReference>
<dbReference type="PROSITE" id="PS50975">
    <property type="entry name" value="ATP_GRASP"/>
    <property type="match status" value="1"/>
</dbReference>
<dbReference type="PROSITE" id="PS00843">
    <property type="entry name" value="DALA_DALA_LIGASE_1"/>
    <property type="match status" value="1"/>
</dbReference>
<dbReference type="PROSITE" id="PS00844">
    <property type="entry name" value="DALA_DALA_LIGASE_2"/>
    <property type="match status" value="1"/>
</dbReference>
<proteinExistence type="inferred from homology"/>
<organism>
    <name type="scientific">Mycobacterium sp. (strain JLS)</name>
    <dbReference type="NCBI Taxonomy" id="164757"/>
    <lineage>
        <taxon>Bacteria</taxon>
        <taxon>Bacillati</taxon>
        <taxon>Actinomycetota</taxon>
        <taxon>Actinomycetes</taxon>
        <taxon>Mycobacteriales</taxon>
        <taxon>Mycobacteriaceae</taxon>
        <taxon>Mycobacterium</taxon>
    </lineage>
</organism>
<reference key="1">
    <citation type="submission" date="2007-02" db="EMBL/GenBank/DDBJ databases">
        <title>Complete sequence of Mycobacterium sp. JLS.</title>
        <authorList>
            <consortium name="US DOE Joint Genome Institute"/>
            <person name="Copeland A."/>
            <person name="Lucas S."/>
            <person name="Lapidus A."/>
            <person name="Barry K."/>
            <person name="Detter J.C."/>
            <person name="Glavina del Rio T."/>
            <person name="Hammon N."/>
            <person name="Israni S."/>
            <person name="Dalin E."/>
            <person name="Tice H."/>
            <person name="Pitluck S."/>
            <person name="Chain P."/>
            <person name="Malfatti S."/>
            <person name="Shin M."/>
            <person name="Vergez L."/>
            <person name="Schmutz J."/>
            <person name="Larimer F."/>
            <person name="Land M."/>
            <person name="Hauser L."/>
            <person name="Kyrpides N."/>
            <person name="Mikhailova N."/>
            <person name="Miller C.D."/>
            <person name="Anderson A.J."/>
            <person name="Sims R.C."/>
            <person name="Richardson P."/>
        </authorList>
    </citation>
    <scope>NUCLEOTIDE SEQUENCE [LARGE SCALE GENOMIC DNA]</scope>
    <source>
        <strain>JLS</strain>
    </source>
</reference>
<accession>A3PXS0</accession>
<name>DDL_MYCSJ</name>
<evidence type="ECO:0000250" key="1"/>
<evidence type="ECO:0000255" key="2">
    <source>
        <dbReference type="HAMAP-Rule" id="MF_00047"/>
    </source>
</evidence>
<keyword id="KW-0067">ATP-binding</keyword>
<keyword id="KW-0133">Cell shape</keyword>
<keyword id="KW-0961">Cell wall biogenesis/degradation</keyword>
<keyword id="KW-0963">Cytoplasm</keyword>
<keyword id="KW-0436">Ligase</keyword>
<keyword id="KW-0460">Magnesium</keyword>
<keyword id="KW-0464">Manganese</keyword>
<keyword id="KW-0479">Metal-binding</keyword>
<keyword id="KW-0547">Nucleotide-binding</keyword>
<keyword id="KW-0573">Peptidoglycan synthesis</keyword>